<reference key="1">
    <citation type="journal article" date="1999" name="Electrophoresis">
        <title>Separation and characterization of needle and xylem maritime pine proteins.</title>
        <authorList>
            <person name="Costa P."/>
            <person name="Pionneau C."/>
            <person name="Bauw G."/>
            <person name="Dubos C."/>
            <person name="Bahrman N."/>
            <person name="Kremer A."/>
            <person name="Frigerio J.-M."/>
            <person name="Plomion C."/>
        </authorList>
    </citation>
    <scope>PROTEIN SEQUENCE</scope>
    <source>
        <tissue>Needle</tissue>
    </source>
</reference>
<comment type="miscellaneous">
    <text>On the 2D-gel the determined pI of this unknown protein is: 5.6, its MW is: 36 kDa.</text>
</comment>
<accession>P81674</accession>
<feature type="chain" id="PRO_0000055557" description="Unknown protein from 2D-PAGE of needles">
    <location>
        <begin position="1" status="less than"/>
        <end position="20" status="greater than"/>
    </location>
</feature>
<feature type="sequence variant">
    <original>F</original>
    <variation>I</variation>
    <location>
        <position position="13"/>
    </location>
</feature>
<feature type="sequence variant">
    <original>Y</original>
    <variation>E</variation>
    <location>
        <position position="14"/>
    </location>
</feature>
<feature type="sequence variant">
    <original>R</original>
    <variation>K</variation>
    <location>
        <position position="15"/>
    </location>
</feature>
<feature type="non-consecutive residues" evidence="1">
    <location>
        <begin position="11"/>
        <end position="12"/>
    </location>
</feature>
<feature type="non-terminal residue">
    <location>
        <position position="1"/>
    </location>
</feature>
<feature type="non-terminal residue">
    <location>
        <position position="20"/>
    </location>
</feature>
<proteinExistence type="evidence at protein level"/>
<keyword id="KW-0903">Direct protein sequencing</keyword>
<sequence>IIYDXVGQCDKDFYRPELPR</sequence>
<organism>
    <name type="scientific">Pinus pinaster</name>
    <name type="common">Maritime pine</name>
    <dbReference type="NCBI Taxonomy" id="71647"/>
    <lineage>
        <taxon>Eukaryota</taxon>
        <taxon>Viridiplantae</taxon>
        <taxon>Streptophyta</taxon>
        <taxon>Embryophyta</taxon>
        <taxon>Tracheophyta</taxon>
        <taxon>Spermatophyta</taxon>
        <taxon>Pinopsida</taxon>
        <taxon>Pinidae</taxon>
        <taxon>Conifers I</taxon>
        <taxon>Pinales</taxon>
        <taxon>Pinaceae</taxon>
        <taxon>Pinus</taxon>
        <taxon>Pinus subgen. Pinus</taxon>
    </lineage>
</organism>
<protein>
    <recommendedName>
        <fullName>Unknown protein from 2D-PAGE of needles</fullName>
    </recommendedName>
    <alternativeName>
        <fullName>N147</fullName>
    </alternativeName>
</protein>
<name>UN05_PINPS</name>
<evidence type="ECO:0000305" key="1"/>